<gene>
    <name type="primary">cydD</name>
    <name type="synonym">yxkN</name>
    <name type="ordered locus">BSU38730</name>
</gene>
<dbReference type="EC" id="7.4.2.-" evidence="1"/>
<dbReference type="EMBL" id="D83026">
    <property type="protein sequence ID" value="BAA11730.1"/>
    <property type="molecule type" value="Genomic_DNA"/>
</dbReference>
<dbReference type="EMBL" id="AL009126">
    <property type="protein sequence ID" value="CAB15899.1"/>
    <property type="molecule type" value="Genomic_DNA"/>
</dbReference>
<dbReference type="PIR" id="D69611">
    <property type="entry name" value="D69611"/>
</dbReference>
<dbReference type="RefSeq" id="NP_391752.1">
    <property type="nucleotide sequence ID" value="NC_000964.3"/>
</dbReference>
<dbReference type="SMR" id="P94367"/>
<dbReference type="FunCoup" id="P94367">
    <property type="interactions" value="164"/>
</dbReference>
<dbReference type="STRING" id="224308.BSU38730"/>
<dbReference type="PaxDb" id="224308-BSU38730"/>
<dbReference type="EnsemblBacteria" id="CAB15899">
    <property type="protein sequence ID" value="CAB15899"/>
    <property type="gene ID" value="BSU_38730"/>
</dbReference>
<dbReference type="GeneID" id="936330"/>
<dbReference type="KEGG" id="bsu:BSU38730"/>
<dbReference type="PATRIC" id="fig|224308.179.peg.4192"/>
<dbReference type="eggNOG" id="COG4987">
    <property type="taxonomic scope" value="Bacteria"/>
</dbReference>
<dbReference type="InParanoid" id="P94367"/>
<dbReference type="OrthoDB" id="9802264at2"/>
<dbReference type="PhylomeDB" id="P94367"/>
<dbReference type="BioCyc" id="BSUB:BSU38730-MONOMER"/>
<dbReference type="Proteomes" id="UP000001570">
    <property type="component" value="Chromosome"/>
</dbReference>
<dbReference type="GO" id="GO:0005886">
    <property type="term" value="C:plasma membrane"/>
    <property type="evidence" value="ECO:0007669"/>
    <property type="project" value="UniProtKB-SubCell"/>
</dbReference>
<dbReference type="GO" id="GO:0015421">
    <property type="term" value="F:ABC-type oligopeptide transporter activity"/>
    <property type="evidence" value="ECO:0000318"/>
    <property type="project" value="GO_Central"/>
</dbReference>
<dbReference type="GO" id="GO:0005524">
    <property type="term" value="F:ATP binding"/>
    <property type="evidence" value="ECO:0007669"/>
    <property type="project" value="UniProtKB-KW"/>
</dbReference>
<dbReference type="GO" id="GO:0016887">
    <property type="term" value="F:ATP hydrolysis activity"/>
    <property type="evidence" value="ECO:0007669"/>
    <property type="project" value="InterPro"/>
</dbReference>
<dbReference type="GO" id="GO:0006865">
    <property type="term" value="P:amino acid transport"/>
    <property type="evidence" value="ECO:0007669"/>
    <property type="project" value="UniProtKB-KW"/>
</dbReference>
<dbReference type="GO" id="GO:0045454">
    <property type="term" value="P:cell redox homeostasis"/>
    <property type="evidence" value="ECO:0007669"/>
    <property type="project" value="InterPro"/>
</dbReference>
<dbReference type="GO" id="GO:0034775">
    <property type="term" value="P:glutathione transmembrane transport"/>
    <property type="evidence" value="ECO:0007669"/>
    <property type="project" value="InterPro"/>
</dbReference>
<dbReference type="CDD" id="cd03247">
    <property type="entry name" value="ABCC_cytochrome_bd"/>
    <property type="match status" value="1"/>
</dbReference>
<dbReference type="FunFam" id="3.40.50.300:FF:000221">
    <property type="entry name" value="Multidrug ABC transporter ATP-binding protein"/>
    <property type="match status" value="1"/>
</dbReference>
<dbReference type="FunFam" id="1.20.1560.10:FF:000141">
    <property type="entry name" value="Thiol reductant ABC exporter subunit CydC"/>
    <property type="match status" value="1"/>
</dbReference>
<dbReference type="Gene3D" id="1.20.1560.10">
    <property type="entry name" value="ABC transporter type 1, transmembrane domain"/>
    <property type="match status" value="1"/>
</dbReference>
<dbReference type="Gene3D" id="3.40.50.300">
    <property type="entry name" value="P-loop containing nucleotide triphosphate hydrolases"/>
    <property type="match status" value="1"/>
</dbReference>
<dbReference type="InterPro" id="IPR003593">
    <property type="entry name" value="AAA+_ATPase"/>
</dbReference>
<dbReference type="InterPro" id="IPR011527">
    <property type="entry name" value="ABC1_TM_dom"/>
</dbReference>
<dbReference type="InterPro" id="IPR036640">
    <property type="entry name" value="ABC1_TM_sf"/>
</dbReference>
<dbReference type="InterPro" id="IPR014223">
    <property type="entry name" value="ABC_CydC/D"/>
</dbReference>
<dbReference type="InterPro" id="IPR003439">
    <property type="entry name" value="ABC_transporter-like_ATP-bd"/>
</dbReference>
<dbReference type="InterPro" id="IPR017871">
    <property type="entry name" value="ABC_transporter-like_CS"/>
</dbReference>
<dbReference type="InterPro" id="IPR027417">
    <property type="entry name" value="P-loop_NTPase"/>
</dbReference>
<dbReference type="InterPro" id="IPR039421">
    <property type="entry name" value="Type_1_exporter"/>
</dbReference>
<dbReference type="NCBIfam" id="TIGR02868">
    <property type="entry name" value="CydC"/>
    <property type="match status" value="1"/>
</dbReference>
<dbReference type="PANTHER" id="PTHR43394:SF1">
    <property type="entry name" value="ATP-BINDING CASSETTE SUB-FAMILY B MEMBER 10, MITOCHONDRIAL"/>
    <property type="match status" value="1"/>
</dbReference>
<dbReference type="PANTHER" id="PTHR43394">
    <property type="entry name" value="ATP-DEPENDENT PERMEASE MDL1, MITOCHONDRIAL"/>
    <property type="match status" value="1"/>
</dbReference>
<dbReference type="Pfam" id="PF00664">
    <property type="entry name" value="ABC_membrane"/>
    <property type="match status" value="1"/>
</dbReference>
<dbReference type="Pfam" id="PF00005">
    <property type="entry name" value="ABC_tran"/>
    <property type="match status" value="1"/>
</dbReference>
<dbReference type="SMART" id="SM00382">
    <property type="entry name" value="AAA"/>
    <property type="match status" value="1"/>
</dbReference>
<dbReference type="SUPFAM" id="SSF90123">
    <property type="entry name" value="ABC transporter transmembrane region"/>
    <property type="match status" value="1"/>
</dbReference>
<dbReference type="SUPFAM" id="SSF52540">
    <property type="entry name" value="P-loop containing nucleoside triphosphate hydrolases"/>
    <property type="match status" value="1"/>
</dbReference>
<dbReference type="PROSITE" id="PS50929">
    <property type="entry name" value="ABC_TM1F"/>
    <property type="match status" value="1"/>
</dbReference>
<dbReference type="PROSITE" id="PS00211">
    <property type="entry name" value="ABC_TRANSPORTER_1"/>
    <property type="match status" value="1"/>
</dbReference>
<dbReference type="PROSITE" id="PS50893">
    <property type="entry name" value="ABC_TRANSPORTER_2"/>
    <property type="match status" value="1"/>
</dbReference>
<reference key="1">
    <citation type="journal article" date="1996" name="Microbiology">
        <title>Sequencing of a 65 kb region of the Bacillus subtilis genome containing the lic and cel loci, and creation of a 177 kb contig covering the gnt-sacXY region.</title>
        <authorList>
            <person name="Yoshida K."/>
            <person name="Shindo K."/>
            <person name="Sano H."/>
            <person name="Seki S."/>
            <person name="Fujimura M."/>
            <person name="Yanai N."/>
            <person name="Miwa Y."/>
            <person name="Fujita Y."/>
        </authorList>
    </citation>
    <scope>NUCLEOTIDE SEQUENCE [GENOMIC DNA]</scope>
    <source>
        <strain>168 / BGSC1A1</strain>
    </source>
</reference>
<reference key="2">
    <citation type="journal article" date="1997" name="Nature">
        <title>The complete genome sequence of the Gram-positive bacterium Bacillus subtilis.</title>
        <authorList>
            <person name="Kunst F."/>
            <person name="Ogasawara N."/>
            <person name="Moszer I."/>
            <person name="Albertini A.M."/>
            <person name="Alloni G."/>
            <person name="Azevedo V."/>
            <person name="Bertero M.G."/>
            <person name="Bessieres P."/>
            <person name="Bolotin A."/>
            <person name="Borchert S."/>
            <person name="Borriss R."/>
            <person name="Boursier L."/>
            <person name="Brans A."/>
            <person name="Braun M."/>
            <person name="Brignell S.C."/>
            <person name="Bron S."/>
            <person name="Brouillet S."/>
            <person name="Bruschi C.V."/>
            <person name="Caldwell B."/>
            <person name="Capuano V."/>
            <person name="Carter N.M."/>
            <person name="Choi S.-K."/>
            <person name="Codani J.-J."/>
            <person name="Connerton I.F."/>
            <person name="Cummings N.J."/>
            <person name="Daniel R.A."/>
            <person name="Denizot F."/>
            <person name="Devine K.M."/>
            <person name="Duesterhoeft A."/>
            <person name="Ehrlich S.D."/>
            <person name="Emmerson P.T."/>
            <person name="Entian K.-D."/>
            <person name="Errington J."/>
            <person name="Fabret C."/>
            <person name="Ferrari E."/>
            <person name="Foulger D."/>
            <person name="Fritz C."/>
            <person name="Fujita M."/>
            <person name="Fujita Y."/>
            <person name="Fuma S."/>
            <person name="Galizzi A."/>
            <person name="Galleron N."/>
            <person name="Ghim S.-Y."/>
            <person name="Glaser P."/>
            <person name="Goffeau A."/>
            <person name="Golightly E.J."/>
            <person name="Grandi G."/>
            <person name="Guiseppi G."/>
            <person name="Guy B.J."/>
            <person name="Haga K."/>
            <person name="Haiech J."/>
            <person name="Harwood C.R."/>
            <person name="Henaut A."/>
            <person name="Hilbert H."/>
            <person name="Holsappel S."/>
            <person name="Hosono S."/>
            <person name="Hullo M.-F."/>
            <person name="Itaya M."/>
            <person name="Jones L.-M."/>
            <person name="Joris B."/>
            <person name="Karamata D."/>
            <person name="Kasahara Y."/>
            <person name="Klaerr-Blanchard M."/>
            <person name="Klein C."/>
            <person name="Kobayashi Y."/>
            <person name="Koetter P."/>
            <person name="Koningstein G."/>
            <person name="Krogh S."/>
            <person name="Kumano M."/>
            <person name="Kurita K."/>
            <person name="Lapidus A."/>
            <person name="Lardinois S."/>
            <person name="Lauber J."/>
            <person name="Lazarevic V."/>
            <person name="Lee S.-M."/>
            <person name="Levine A."/>
            <person name="Liu H."/>
            <person name="Masuda S."/>
            <person name="Mauel C."/>
            <person name="Medigue C."/>
            <person name="Medina N."/>
            <person name="Mellado R.P."/>
            <person name="Mizuno M."/>
            <person name="Moestl D."/>
            <person name="Nakai S."/>
            <person name="Noback M."/>
            <person name="Noone D."/>
            <person name="O'Reilly M."/>
            <person name="Ogawa K."/>
            <person name="Ogiwara A."/>
            <person name="Oudega B."/>
            <person name="Park S.-H."/>
            <person name="Parro V."/>
            <person name="Pohl T.M."/>
            <person name="Portetelle D."/>
            <person name="Porwollik S."/>
            <person name="Prescott A.M."/>
            <person name="Presecan E."/>
            <person name="Pujic P."/>
            <person name="Purnelle B."/>
            <person name="Rapoport G."/>
            <person name="Rey M."/>
            <person name="Reynolds S."/>
            <person name="Rieger M."/>
            <person name="Rivolta C."/>
            <person name="Rocha E."/>
            <person name="Roche B."/>
            <person name="Rose M."/>
            <person name="Sadaie Y."/>
            <person name="Sato T."/>
            <person name="Scanlan E."/>
            <person name="Schleich S."/>
            <person name="Schroeter R."/>
            <person name="Scoffone F."/>
            <person name="Sekiguchi J."/>
            <person name="Sekowska A."/>
            <person name="Seror S.J."/>
            <person name="Serror P."/>
            <person name="Shin B.-S."/>
            <person name="Soldo B."/>
            <person name="Sorokin A."/>
            <person name="Tacconi E."/>
            <person name="Takagi T."/>
            <person name="Takahashi H."/>
            <person name="Takemaru K."/>
            <person name="Takeuchi M."/>
            <person name="Tamakoshi A."/>
            <person name="Tanaka T."/>
            <person name="Terpstra P."/>
            <person name="Tognoni A."/>
            <person name="Tosato V."/>
            <person name="Uchiyama S."/>
            <person name="Vandenbol M."/>
            <person name="Vannier F."/>
            <person name="Vassarotti A."/>
            <person name="Viari A."/>
            <person name="Wambutt R."/>
            <person name="Wedler E."/>
            <person name="Wedler H."/>
            <person name="Weitzenegger T."/>
            <person name="Winters P."/>
            <person name="Wipat A."/>
            <person name="Yamamoto H."/>
            <person name="Yamane K."/>
            <person name="Yasumoto K."/>
            <person name="Yata K."/>
            <person name="Yoshida K."/>
            <person name="Yoshikawa H.-F."/>
            <person name="Zumstein E."/>
            <person name="Yoshikawa H."/>
            <person name="Danchin A."/>
        </authorList>
    </citation>
    <scope>NUCLEOTIDE SEQUENCE [LARGE SCALE GENOMIC DNA]</scope>
    <source>
        <strain>168</strain>
    </source>
</reference>
<name>CYDD_BACSU</name>
<evidence type="ECO:0000250" key="1">
    <source>
        <dbReference type="UniProtKB" id="P29018"/>
    </source>
</evidence>
<evidence type="ECO:0000255" key="2"/>
<evidence type="ECO:0000255" key="3">
    <source>
        <dbReference type="PROSITE-ProRule" id="PRU00434"/>
    </source>
</evidence>
<evidence type="ECO:0000255" key="4">
    <source>
        <dbReference type="PROSITE-ProRule" id="PRU00441"/>
    </source>
</evidence>
<evidence type="ECO:0000305" key="5"/>
<protein>
    <recommendedName>
        <fullName evidence="1">Glutathione/L-cysteine transport system ATP-binding/permease protein CydD</fullName>
        <ecNumber evidence="1">7.4.2.-</ecNumber>
    </recommendedName>
</protein>
<feature type="chain" id="PRO_0000092243" description="Glutathione/L-cysteine transport system ATP-binding/permease protein CydD">
    <location>
        <begin position="1"/>
        <end position="575"/>
    </location>
</feature>
<feature type="transmembrane region" description="Helical" evidence="2">
    <location>
        <begin position="17"/>
        <end position="37"/>
    </location>
</feature>
<feature type="transmembrane region" description="Helical" evidence="2">
    <location>
        <begin position="53"/>
        <end position="73"/>
    </location>
</feature>
<feature type="transmembrane region" description="Helical" evidence="2">
    <location>
        <begin position="135"/>
        <end position="155"/>
    </location>
</feature>
<feature type="transmembrane region" description="Helical" evidence="2">
    <location>
        <begin position="161"/>
        <end position="181"/>
    </location>
</feature>
<feature type="transmembrane region" description="Helical" evidence="2">
    <location>
        <begin position="246"/>
        <end position="266"/>
    </location>
</feature>
<feature type="transmembrane region" description="Helical" evidence="2">
    <location>
        <begin position="275"/>
        <end position="295"/>
    </location>
</feature>
<feature type="domain" description="ABC transmembrane type-1" evidence="4">
    <location>
        <begin position="19"/>
        <end position="303"/>
    </location>
</feature>
<feature type="domain" description="ABC transporter" evidence="3">
    <location>
        <begin position="337"/>
        <end position="570"/>
    </location>
</feature>
<feature type="binding site" evidence="3">
    <location>
        <begin position="370"/>
        <end position="377"/>
    </location>
    <ligand>
        <name>ATP</name>
        <dbReference type="ChEBI" id="CHEBI:30616"/>
    </ligand>
</feature>
<organism>
    <name type="scientific">Bacillus subtilis (strain 168)</name>
    <dbReference type="NCBI Taxonomy" id="224308"/>
    <lineage>
        <taxon>Bacteria</taxon>
        <taxon>Bacillati</taxon>
        <taxon>Bacillota</taxon>
        <taxon>Bacilli</taxon>
        <taxon>Bacillales</taxon>
        <taxon>Bacillaceae</taxon>
        <taxon>Bacillus</taxon>
    </lineage>
</organism>
<comment type="function">
    <text evidence="1">Part of the ABC transporter complex CydDC that exports the reduced low-molecular-weight thiols cysteine and glutathione from the cell. Export of these thiol-containing redox-active molecules may be crucial for redox homeostasis, permitting correct assembly of various respiratory complexes and formation of correct disulfide bonds in secreted proteins. CydD contains transmembrane domains (TMD), which form a pore in the membrane, and an ATP-binding domain (NBD), which is responsible for energy generation.</text>
</comment>
<comment type="catalytic activity">
    <reaction evidence="1">
        <text>L-cysteine(in) + ATP + H2O = L-cysteine(out) + ADP + phosphate + H(+)</text>
        <dbReference type="Rhea" id="RHEA:29783"/>
        <dbReference type="ChEBI" id="CHEBI:15377"/>
        <dbReference type="ChEBI" id="CHEBI:15378"/>
        <dbReference type="ChEBI" id="CHEBI:30616"/>
        <dbReference type="ChEBI" id="CHEBI:35235"/>
        <dbReference type="ChEBI" id="CHEBI:43474"/>
        <dbReference type="ChEBI" id="CHEBI:456216"/>
    </reaction>
    <physiologicalReaction direction="left-to-right" evidence="1">
        <dbReference type="Rhea" id="RHEA:29784"/>
    </physiologicalReaction>
</comment>
<comment type="catalytic activity">
    <reaction evidence="1">
        <text>glutathione(in) + ATP + H2O = glutathione(out) + ADP + phosphate + H(+)</text>
        <dbReference type="Rhea" id="RHEA:29787"/>
        <dbReference type="ChEBI" id="CHEBI:15377"/>
        <dbReference type="ChEBI" id="CHEBI:15378"/>
        <dbReference type="ChEBI" id="CHEBI:30616"/>
        <dbReference type="ChEBI" id="CHEBI:43474"/>
        <dbReference type="ChEBI" id="CHEBI:57925"/>
        <dbReference type="ChEBI" id="CHEBI:456216"/>
    </reaction>
    <physiologicalReaction direction="left-to-right" evidence="1">
        <dbReference type="Rhea" id="RHEA:29788"/>
    </physiologicalReaction>
</comment>
<comment type="subunit">
    <text evidence="1">Forms a heterodimer with CydC.</text>
</comment>
<comment type="subcellular location">
    <subcellularLocation>
        <location evidence="5">Cell membrane</location>
        <topology evidence="2">Multi-pass membrane protein</topology>
    </subcellularLocation>
</comment>
<comment type="domain">
    <text evidence="5">In CydD the ATP-binding domain (NBD) and the transmembrane domain (TMD) are fused.</text>
</comment>
<comment type="similarity">
    <text evidence="5">Belongs to the ABC transporter superfamily. Cysteine exporter (TC 3.A.1.129.1) family.</text>
</comment>
<sequence length="575" mass="64510">MKKEEWILPYIKQNARLFVLVIFLGAVTIFSAAFLMFTSGFLISKAATRPENILLIYVPIVAVRTFGIARSVSRYVERLVGHHIILKIVSDMRVRLYNMLEPGALMLRSRFRTGDMLGILSEDIEHLQDAFLKTIFPAISALLLYAVSVIALGFFSWPFAILLALYLFVLVVLFPVVSLLVTRAKNAKLKSGRNVLYSRLTDAVMGVSDWMFSGRRHAFIDAYEKEERDWFELERKKQRFTRWRDFAAQCLVAGLILLMLFWTAGQQADGELAKTMIAAFVLVVFPLTEAFLPLSDALGEVPGYQDSIRRMNNVAPQPEASQTESGDQILDLQDVTLAFRDVTFSYDNSSQVLHNFSFTLRQGEKMALLGRSGSGKSTSLALIEGALKPDSGSVTLNGVETALLKDQIADAVAVLNQKPHLFDTSILNNIRLGNGEASDEDVRRAAKQVKLHDYIESLPDGYHTSVQETGIRFSGGERQRIALARILLQDTPIIILDEPTVGLDPITERELMETVFEVLKGKTILWITHHLAGVEAADKIVFLENGKTEMEGTHEELLAANERYRRLYHLDVPVK</sequence>
<accession>P94367</accession>
<keyword id="KW-0029">Amino-acid transport</keyword>
<keyword id="KW-0067">ATP-binding</keyword>
<keyword id="KW-1003">Cell membrane</keyword>
<keyword id="KW-0472">Membrane</keyword>
<keyword id="KW-0547">Nucleotide-binding</keyword>
<keyword id="KW-1185">Reference proteome</keyword>
<keyword id="KW-1278">Translocase</keyword>
<keyword id="KW-0812">Transmembrane</keyword>
<keyword id="KW-1133">Transmembrane helix</keyword>
<keyword id="KW-0813">Transport</keyword>
<proteinExistence type="inferred from homology"/>